<comment type="function">
    <text evidence="1">Catalyzes the isomerization between 2-isopropylmalate and 3-isopropylmalate, via the formation of 2-isopropylmaleate.</text>
</comment>
<comment type="catalytic activity">
    <reaction evidence="1">
        <text>(2R,3S)-3-isopropylmalate = (2S)-2-isopropylmalate</text>
        <dbReference type="Rhea" id="RHEA:32287"/>
        <dbReference type="ChEBI" id="CHEBI:1178"/>
        <dbReference type="ChEBI" id="CHEBI:35121"/>
        <dbReference type="EC" id="4.2.1.33"/>
    </reaction>
</comment>
<comment type="cofactor">
    <cofactor evidence="1">
        <name>[4Fe-4S] cluster</name>
        <dbReference type="ChEBI" id="CHEBI:49883"/>
    </cofactor>
    <text evidence="1">Binds 1 [4Fe-4S] cluster per subunit.</text>
</comment>
<comment type="pathway">
    <text evidence="1">Amino-acid biosynthesis; L-leucine biosynthesis; L-leucine from 3-methyl-2-oxobutanoate: step 2/4.</text>
</comment>
<comment type="subunit">
    <text evidence="1">Heterodimer of LeuC and LeuD.</text>
</comment>
<comment type="similarity">
    <text evidence="1">Belongs to the aconitase/IPM isomerase family. LeuC type 1 subfamily.</text>
</comment>
<proteinExistence type="evidence at protein level"/>
<keyword id="KW-0004">4Fe-4S</keyword>
<keyword id="KW-0028">Amino-acid biosynthesis</keyword>
<keyword id="KW-0100">Branched-chain amino acid biosynthesis</keyword>
<keyword id="KW-0408">Iron</keyword>
<keyword id="KW-0411">Iron-sulfur</keyword>
<keyword id="KW-0432">Leucine biosynthesis</keyword>
<keyword id="KW-0456">Lyase</keyword>
<keyword id="KW-0479">Metal-binding</keyword>
<keyword id="KW-1185">Reference proteome</keyword>
<evidence type="ECO:0000255" key="1">
    <source>
        <dbReference type="HAMAP-Rule" id="MF_01026"/>
    </source>
</evidence>
<sequence length="473" mass="50185">MALQTGEPRTLAEKIWDDHIVVSGGGCAPDLIYIDLHLVHEVTSPQAFDGLRLAGRRVRRPELTLATEDHNVPTVDIDQPIADPVSRTQVETLRRNCAEFGIRLHSMGDIEQGIVHVVGPQLGLTQPGMTIVCGDSHTSTHGAFGALAMGIGTSEVEHVLATQTLPLRPFKTMAVNVDGRLPDGVSAKDIILALIAKIGTGGGQGHVIEYRGSAIESLSMEGRMTICNMSIEAGARAGMVAPDETTYAFLRGRPHAPTGAQWDTALVYWQRLRTDVGAVFDTEVYLDAASLSPFVTWGTNPGQGVPLAAAVPDPQLMTDDAERQAAEKALAYMDLRPGTAMRDIAVDAVFVGSCTNGRIEDLRVVAEVLRGRKVADGVRMLIVPGSMRVRAQAEAEGLGEIFTDAGAQWRQAGCSMCLGMNPDQLASGERCAATSNRNFEGRQGAGGRTHLVSPAVAAATAVRGTLSSPADLN</sequence>
<feature type="chain" id="PRO_0000076766" description="3-isopropylmalate dehydratase large subunit">
    <location>
        <begin position="1"/>
        <end position="473"/>
    </location>
</feature>
<feature type="binding site" evidence="1">
    <location>
        <position position="354"/>
    </location>
    <ligand>
        <name>[4Fe-4S] cluster</name>
        <dbReference type="ChEBI" id="CHEBI:49883"/>
    </ligand>
</feature>
<feature type="binding site" evidence="1">
    <location>
        <position position="414"/>
    </location>
    <ligand>
        <name>[4Fe-4S] cluster</name>
        <dbReference type="ChEBI" id="CHEBI:49883"/>
    </ligand>
</feature>
<feature type="binding site" evidence="1">
    <location>
        <position position="417"/>
    </location>
    <ligand>
        <name>[4Fe-4S] cluster</name>
        <dbReference type="ChEBI" id="CHEBI:49883"/>
    </ligand>
</feature>
<reference key="1">
    <citation type="journal article" date="1998" name="Nature">
        <title>Deciphering the biology of Mycobacterium tuberculosis from the complete genome sequence.</title>
        <authorList>
            <person name="Cole S.T."/>
            <person name="Brosch R."/>
            <person name="Parkhill J."/>
            <person name="Garnier T."/>
            <person name="Churcher C.M."/>
            <person name="Harris D.E."/>
            <person name="Gordon S.V."/>
            <person name="Eiglmeier K."/>
            <person name="Gas S."/>
            <person name="Barry C.E. III"/>
            <person name="Tekaia F."/>
            <person name="Badcock K."/>
            <person name="Basham D."/>
            <person name="Brown D."/>
            <person name="Chillingworth T."/>
            <person name="Connor R."/>
            <person name="Davies R.M."/>
            <person name="Devlin K."/>
            <person name="Feltwell T."/>
            <person name="Gentles S."/>
            <person name="Hamlin N."/>
            <person name="Holroyd S."/>
            <person name="Hornsby T."/>
            <person name="Jagels K."/>
            <person name="Krogh A."/>
            <person name="McLean J."/>
            <person name="Moule S."/>
            <person name="Murphy L.D."/>
            <person name="Oliver S."/>
            <person name="Osborne J."/>
            <person name="Quail M.A."/>
            <person name="Rajandream M.A."/>
            <person name="Rogers J."/>
            <person name="Rutter S."/>
            <person name="Seeger K."/>
            <person name="Skelton S."/>
            <person name="Squares S."/>
            <person name="Squares R."/>
            <person name="Sulston J.E."/>
            <person name="Taylor K."/>
            <person name="Whitehead S."/>
            <person name="Barrell B.G."/>
        </authorList>
    </citation>
    <scope>NUCLEOTIDE SEQUENCE [LARGE SCALE GENOMIC DNA]</scope>
    <source>
        <strain>ATCC 25618 / H37Rv</strain>
    </source>
</reference>
<reference key="2">
    <citation type="journal article" date="2011" name="Mol. Cell. Proteomics">
        <title>Proteogenomic analysis of Mycobacterium tuberculosis by high resolution mass spectrometry.</title>
        <authorList>
            <person name="Kelkar D.S."/>
            <person name="Kumar D."/>
            <person name="Kumar P."/>
            <person name="Balakrishnan L."/>
            <person name="Muthusamy B."/>
            <person name="Yadav A.K."/>
            <person name="Shrivastava P."/>
            <person name="Marimuthu A."/>
            <person name="Anand S."/>
            <person name="Sundaram H."/>
            <person name="Kingsbury R."/>
            <person name="Harsha H.C."/>
            <person name="Nair B."/>
            <person name="Prasad T.S."/>
            <person name="Chauhan D.S."/>
            <person name="Katoch K."/>
            <person name="Katoch V.M."/>
            <person name="Kumar P."/>
            <person name="Chaerkady R."/>
            <person name="Ramachandran S."/>
            <person name="Dash D."/>
            <person name="Pandey A."/>
        </authorList>
    </citation>
    <scope>IDENTIFICATION BY MASS SPECTROMETRY [LARGE SCALE ANALYSIS]</scope>
    <source>
        <strain>ATCC 25618 / H37Rv</strain>
    </source>
</reference>
<protein>
    <recommendedName>
        <fullName evidence="1">3-isopropylmalate dehydratase large subunit</fullName>
        <ecNumber evidence="1">4.2.1.33</ecNumber>
    </recommendedName>
    <alternativeName>
        <fullName evidence="1">Alpha-IPM isomerase</fullName>
        <shortName evidence="1">IPMI</shortName>
    </alternativeName>
    <alternativeName>
        <fullName evidence="1">Isopropylmalate isomerase</fullName>
    </alternativeName>
</protein>
<accession>P9WQF5</accession>
<accession>L0TDZ8</accession>
<accession>O53237</accession>
<organism>
    <name type="scientific">Mycobacterium tuberculosis (strain ATCC 25618 / H37Rv)</name>
    <dbReference type="NCBI Taxonomy" id="83332"/>
    <lineage>
        <taxon>Bacteria</taxon>
        <taxon>Bacillati</taxon>
        <taxon>Actinomycetota</taxon>
        <taxon>Actinomycetes</taxon>
        <taxon>Mycobacteriales</taxon>
        <taxon>Mycobacteriaceae</taxon>
        <taxon>Mycobacterium</taxon>
        <taxon>Mycobacterium tuberculosis complex</taxon>
    </lineage>
</organism>
<name>LEUC_MYCTU</name>
<gene>
    <name evidence="1" type="primary">leuC</name>
    <name type="ordered locus">Rv2988c</name>
    <name type="ORF">MTV012.02c</name>
</gene>
<dbReference type="EC" id="4.2.1.33" evidence="1"/>
<dbReference type="EMBL" id="AL123456">
    <property type="protein sequence ID" value="CCP45793.1"/>
    <property type="molecule type" value="Genomic_DNA"/>
</dbReference>
<dbReference type="PIR" id="G70853">
    <property type="entry name" value="G70853"/>
</dbReference>
<dbReference type="RefSeq" id="NP_217504.1">
    <property type="nucleotide sequence ID" value="NC_000962.3"/>
</dbReference>
<dbReference type="RefSeq" id="WP_003899570.1">
    <property type="nucleotide sequence ID" value="NZ_NVQJ01000041.1"/>
</dbReference>
<dbReference type="SMR" id="P9WQF5"/>
<dbReference type="FunCoup" id="P9WQF5">
    <property type="interactions" value="305"/>
</dbReference>
<dbReference type="STRING" id="83332.Rv2988c"/>
<dbReference type="PaxDb" id="83332-Rv2988c"/>
<dbReference type="GeneID" id="45426977"/>
<dbReference type="GeneID" id="887875"/>
<dbReference type="KEGG" id="mtu:Rv2988c"/>
<dbReference type="KEGG" id="mtv:RVBD_2988c"/>
<dbReference type="TubercuList" id="Rv2988c"/>
<dbReference type="eggNOG" id="COG0065">
    <property type="taxonomic scope" value="Bacteria"/>
</dbReference>
<dbReference type="InParanoid" id="P9WQF5"/>
<dbReference type="OrthoDB" id="9802769at2"/>
<dbReference type="PhylomeDB" id="P9WQF5"/>
<dbReference type="BRENDA" id="4.2.1.33">
    <property type="organism ID" value="3445"/>
</dbReference>
<dbReference type="UniPathway" id="UPA00048">
    <property type="reaction ID" value="UER00071"/>
</dbReference>
<dbReference type="Proteomes" id="UP000001584">
    <property type="component" value="Chromosome"/>
</dbReference>
<dbReference type="GO" id="GO:0009274">
    <property type="term" value="C:peptidoglycan-based cell wall"/>
    <property type="evidence" value="ECO:0007005"/>
    <property type="project" value="MTBBASE"/>
</dbReference>
<dbReference type="GO" id="GO:0003861">
    <property type="term" value="F:3-isopropylmalate dehydratase activity"/>
    <property type="evidence" value="ECO:0007669"/>
    <property type="project" value="UniProtKB-UniRule"/>
</dbReference>
<dbReference type="GO" id="GO:0051539">
    <property type="term" value="F:4 iron, 4 sulfur cluster binding"/>
    <property type="evidence" value="ECO:0007669"/>
    <property type="project" value="UniProtKB-KW"/>
</dbReference>
<dbReference type="GO" id="GO:0046872">
    <property type="term" value="F:metal ion binding"/>
    <property type="evidence" value="ECO:0007669"/>
    <property type="project" value="UniProtKB-KW"/>
</dbReference>
<dbReference type="GO" id="GO:0009098">
    <property type="term" value="P:L-leucine biosynthetic process"/>
    <property type="evidence" value="ECO:0007669"/>
    <property type="project" value="UniProtKB-UniRule"/>
</dbReference>
<dbReference type="CDD" id="cd01583">
    <property type="entry name" value="IPMI"/>
    <property type="match status" value="1"/>
</dbReference>
<dbReference type="FunFam" id="3.30.499.10:FF:000006">
    <property type="entry name" value="3-isopropylmalate dehydratase large subunit"/>
    <property type="match status" value="1"/>
</dbReference>
<dbReference type="FunFam" id="3.30.499.10:FF:000007">
    <property type="entry name" value="3-isopropylmalate dehydratase large subunit"/>
    <property type="match status" value="1"/>
</dbReference>
<dbReference type="Gene3D" id="3.30.499.10">
    <property type="entry name" value="Aconitase, domain 3"/>
    <property type="match status" value="2"/>
</dbReference>
<dbReference type="HAMAP" id="MF_01026">
    <property type="entry name" value="LeuC_type1"/>
    <property type="match status" value="1"/>
</dbReference>
<dbReference type="InterPro" id="IPR004430">
    <property type="entry name" value="3-IsopropMal_deHydase_lsu"/>
</dbReference>
<dbReference type="InterPro" id="IPR015931">
    <property type="entry name" value="Acnase/IPM_dHydase_lsu_aba_1/3"/>
</dbReference>
<dbReference type="InterPro" id="IPR001030">
    <property type="entry name" value="Acoase/IPM_deHydtase_lsu_aba"/>
</dbReference>
<dbReference type="InterPro" id="IPR018136">
    <property type="entry name" value="Aconitase_4Fe-4S_BS"/>
</dbReference>
<dbReference type="InterPro" id="IPR036008">
    <property type="entry name" value="Aconitase_4Fe-4S_dom"/>
</dbReference>
<dbReference type="InterPro" id="IPR050067">
    <property type="entry name" value="IPM_dehydratase_rel_enz"/>
</dbReference>
<dbReference type="InterPro" id="IPR033941">
    <property type="entry name" value="IPMI_cat"/>
</dbReference>
<dbReference type="NCBIfam" id="TIGR00170">
    <property type="entry name" value="leuC"/>
    <property type="match status" value="1"/>
</dbReference>
<dbReference type="NCBIfam" id="NF004016">
    <property type="entry name" value="PRK05478.1"/>
    <property type="match status" value="1"/>
</dbReference>
<dbReference type="NCBIfam" id="NF009116">
    <property type="entry name" value="PRK12466.1"/>
    <property type="match status" value="1"/>
</dbReference>
<dbReference type="PANTHER" id="PTHR43822:SF9">
    <property type="entry name" value="3-ISOPROPYLMALATE DEHYDRATASE"/>
    <property type="match status" value="1"/>
</dbReference>
<dbReference type="PANTHER" id="PTHR43822">
    <property type="entry name" value="HOMOACONITASE, MITOCHONDRIAL-RELATED"/>
    <property type="match status" value="1"/>
</dbReference>
<dbReference type="Pfam" id="PF00330">
    <property type="entry name" value="Aconitase"/>
    <property type="match status" value="1"/>
</dbReference>
<dbReference type="PRINTS" id="PR00415">
    <property type="entry name" value="ACONITASE"/>
</dbReference>
<dbReference type="SUPFAM" id="SSF53732">
    <property type="entry name" value="Aconitase iron-sulfur domain"/>
    <property type="match status" value="1"/>
</dbReference>
<dbReference type="PROSITE" id="PS00450">
    <property type="entry name" value="ACONITASE_1"/>
    <property type="match status" value="1"/>
</dbReference>
<dbReference type="PROSITE" id="PS01244">
    <property type="entry name" value="ACONITASE_2"/>
    <property type="match status" value="1"/>
</dbReference>